<protein>
    <recommendedName>
        <fullName evidence="1">Argininosuccinate lyase</fullName>
        <shortName evidence="1">ASAL</shortName>
        <ecNumber evidence="1">4.3.2.1</ecNumber>
    </recommendedName>
    <alternativeName>
        <fullName evidence="1">Arginosuccinase</fullName>
    </alternativeName>
</protein>
<name>ARLY_PHOV8</name>
<feature type="chain" id="PRO_1000116310" description="Argininosuccinate lyase">
    <location>
        <begin position="1"/>
        <end position="446"/>
    </location>
</feature>
<comment type="catalytic activity">
    <reaction evidence="1">
        <text>2-(N(omega)-L-arginino)succinate = fumarate + L-arginine</text>
        <dbReference type="Rhea" id="RHEA:24020"/>
        <dbReference type="ChEBI" id="CHEBI:29806"/>
        <dbReference type="ChEBI" id="CHEBI:32682"/>
        <dbReference type="ChEBI" id="CHEBI:57472"/>
        <dbReference type="EC" id="4.3.2.1"/>
    </reaction>
</comment>
<comment type="pathway">
    <text evidence="1">Amino-acid biosynthesis; L-arginine biosynthesis; L-arginine from L-ornithine and carbamoyl phosphate: step 3/3.</text>
</comment>
<comment type="subcellular location">
    <subcellularLocation>
        <location evidence="1">Cytoplasm</location>
    </subcellularLocation>
</comment>
<comment type="similarity">
    <text evidence="1">Belongs to the lyase 1 family. Argininosuccinate lyase subfamily.</text>
</comment>
<organism>
    <name type="scientific">Phocaeicola vulgatus (strain ATCC 8482 / DSM 1447 / JCM 5826 / CCUG 4940 / NBRC 14291 / NCTC 11154)</name>
    <name type="common">Bacteroides vulgatus</name>
    <dbReference type="NCBI Taxonomy" id="435590"/>
    <lineage>
        <taxon>Bacteria</taxon>
        <taxon>Pseudomonadati</taxon>
        <taxon>Bacteroidota</taxon>
        <taxon>Bacteroidia</taxon>
        <taxon>Bacteroidales</taxon>
        <taxon>Bacteroidaceae</taxon>
        <taxon>Phocaeicola</taxon>
    </lineage>
</organism>
<sequence>MAQKLWEKNVRVNEEIDRFTVGRDREMDLYLAKHDVLGSMAHITMLESIGLLTAGELEMLLAELKNIYASAEKGEFVIEDGIEDVHSQVELMLTRKLGDVGKKIHSGRSRNDQVLVDLKLFTRAELKEVAEEVEQLFHVLISQSNTYKDVLMPGYTHLQIAMPSSFGLWFGAYAESLVDDMMFLQAAFKMCNRNPLGSAAGYGSSFPLDREMTTRLLGFDSMDYNVVYAQMGRGKMERNVAFALASIAGTVSKMAFDACMFSSQNFGFVKLPDECTTGSSIMPHKKNPDVFELTRAKCNKLQALPQQIMMIMNNLPSGYFRDLQIIKEVFLPAFRELKECLQMAAYIMDKIKINEHILDDNRYLYIFSVEEVNRLASEGMPFRDAYKKVGLDIEAGKFTHDKKVHHTHEGSIGNLCNDRIESLMRQVVDGFNFSVMEQAERSLLGR</sequence>
<keyword id="KW-0028">Amino-acid biosynthesis</keyword>
<keyword id="KW-0055">Arginine biosynthesis</keyword>
<keyword id="KW-0963">Cytoplasm</keyword>
<keyword id="KW-0456">Lyase</keyword>
<evidence type="ECO:0000255" key="1">
    <source>
        <dbReference type="HAMAP-Rule" id="MF_00006"/>
    </source>
</evidence>
<gene>
    <name evidence="1" type="primary">argH</name>
    <name type="ordered locus">BVU_0858</name>
</gene>
<accession>A6KYN9</accession>
<reference key="1">
    <citation type="journal article" date="2007" name="PLoS Biol.">
        <title>Evolution of symbiotic bacteria in the distal human intestine.</title>
        <authorList>
            <person name="Xu J."/>
            <person name="Mahowald M.A."/>
            <person name="Ley R.E."/>
            <person name="Lozupone C.A."/>
            <person name="Hamady M."/>
            <person name="Martens E.C."/>
            <person name="Henrissat B."/>
            <person name="Coutinho P.M."/>
            <person name="Minx P."/>
            <person name="Latreille P."/>
            <person name="Cordum H."/>
            <person name="Van Brunt A."/>
            <person name="Kim K."/>
            <person name="Fulton R.S."/>
            <person name="Fulton L.A."/>
            <person name="Clifton S.W."/>
            <person name="Wilson R.K."/>
            <person name="Knight R.D."/>
            <person name="Gordon J.I."/>
        </authorList>
    </citation>
    <scope>NUCLEOTIDE SEQUENCE [LARGE SCALE GENOMIC DNA]</scope>
    <source>
        <strain>ATCC 8482 / DSM 1447 / JCM 5826 / CCUG 4940 / NBRC 14291 / NCTC 11154</strain>
    </source>
</reference>
<proteinExistence type="inferred from homology"/>
<dbReference type="EC" id="4.3.2.1" evidence="1"/>
<dbReference type="EMBL" id="CP000139">
    <property type="protein sequence ID" value="ABR38553.1"/>
    <property type="molecule type" value="Genomic_DNA"/>
</dbReference>
<dbReference type="RefSeq" id="WP_011964922.1">
    <property type="nucleotide sequence ID" value="NC_009614.1"/>
</dbReference>
<dbReference type="SMR" id="A6KYN9"/>
<dbReference type="STRING" id="435590.BVU_0858"/>
<dbReference type="PaxDb" id="435590-BVU_0858"/>
<dbReference type="GeneID" id="5301825"/>
<dbReference type="KEGG" id="bvu:BVU_0858"/>
<dbReference type="eggNOG" id="COG0165">
    <property type="taxonomic scope" value="Bacteria"/>
</dbReference>
<dbReference type="HOGENOM" id="CLU_027272_2_0_10"/>
<dbReference type="BioCyc" id="BVUL435590:G1G59-902-MONOMER"/>
<dbReference type="UniPathway" id="UPA00068">
    <property type="reaction ID" value="UER00114"/>
</dbReference>
<dbReference type="Proteomes" id="UP000002861">
    <property type="component" value="Chromosome"/>
</dbReference>
<dbReference type="GO" id="GO:0005829">
    <property type="term" value="C:cytosol"/>
    <property type="evidence" value="ECO:0007669"/>
    <property type="project" value="TreeGrafter"/>
</dbReference>
<dbReference type="GO" id="GO:0004056">
    <property type="term" value="F:argininosuccinate lyase activity"/>
    <property type="evidence" value="ECO:0007669"/>
    <property type="project" value="UniProtKB-UniRule"/>
</dbReference>
<dbReference type="GO" id="GO:0042450">
    <property type="term" value="P:arginine biosynthetic process via ornithine"/>
    <property type="evidence" value="ECO:0007669"/>
    <property type="project" value="InterPro"/>
</dbReference>
<dbReference type="GO" id="GO:0006526">
    <property type="term" value="P:L-arginine biosynthetic process"/>
    <property type="evidence" value="ECO:0007669"/>
    <property type="project" value="UniProtKB-UniRule"/>
</dbReference>
<dbReference type="CDD" id="cd01359">
    <property type="entry name" value="Argininosuccinate_lyase"/>
    <property type="match status" value="1"/>
</dbReference>
<dbReference type="Gene3D" id="1.10.40.30">
    <property type="entry name" value="Fumarase/aspartase (C-terminal domain)"/>
    <property type="match status" value="1"/>
</dbReference>
<dbReference type="Gene3D" id="1.20.200.10">
    <property type="entry name" value="Fumarase/aspartase (Central domain)"/>
    <property type="match status" value="1"/>
</dbReference>
<dbReference type="Gene3D" id="1.10.275.10">
    <property type="entry name" value="Fumarase/aspartase (N-terminal domain)"/>
    <property type="match status" value="1"/>
</dbReference>
<dbReference type="HAMAP" id="MF_00006">
    <property type="entry name" value="Arg_succ_lyase"/>
    <property type="match status" value="1"/>
</dbReference>
<dbReference type="InterPro" id="IPR009049">
    <property type="entry name" value="Argininosuccinate_lyase"/>
</dbReference>
<dbReference type="InterPro" id="IPR024083">
    <property type="entry name" value="Fumarase/histidase_N"/>
</dbReference>
<dbReference type="InterPro" id="IPR020557">
    <property type="entry name" value="Fumarate_lyase_CS"/>
</dbReference>
<dbReference type="InterPro" id="IPR000362">
    <property type="entry name" value="Fumarate_lyase_fam"/>
</dbReference>
<dbReference type="InterPro" id="IPR022761">
    <property type="entry name" value="Fumarate_lyase_N"/>
</dbReference>
<dbReference type="InterPro" id="IPR008948">
    <property type="entry name" value="L-Aspartase-like"/>
</dbReference>
<dbReference type="NCBIfam" id="TIGR00838">
    <property type="entry name" value="argH"/>
    <property type="match status" value="1"/>
</dbReference>
<dbReference type="PANTHER" id="PTHR43814">
    <property type="entry name" value="ARGININOSUCCINATE LYASE"/>
    <property type="match status" value="1"/>
</dbReference>
<dbReference type="PANTHER" id="PTHR43814:SF1">
    <property type="entry name" value="ARGININOSUCCINATE LYASE"/>
    <property type="match status" value="1"/>
</dbReference>
<dbReference type="Pfam" id="PF00206">
    <property type="entry name" value="Lyase_1"/>
    <property type="match status" value="1"/>
</dbReference>
<dbReference type="PRINTS" id="PR00145">
    <property type="entry name" value="ARGSUCLYASE"/>
</dbReference>
<dbReference type="PRINTS" id="PR00149">
    <property type="entry name" value="FUMRATELYASE"/>
</dbReference>
<dbReference type="SUPFAM" id="SSF48557">
    <property type="entry name" value="L-aspartase-like"/>
    <property type="match status" value="1"/>
</dbReference>
<dbReference type="PROSITE" id="PS00163">
    <property type="entry name" value="FUMARATE_LYASES"/>
    <property type="match status" value="1"/>
</dbReference>